<accession>B7HNU2</accession>
<gene>
    <name evidence="1" type="primary">xseB</name>
    <name type="ordered locus">BCAH187_A4309</name>
</gene>
<comment type="function">
    <text evidence="1">Bidirectionally degrades single-stranded DNA into large acid-insoluble oligonucleotides, which are then degraded further into small acid-soluble oligonucleotides.</text>
</comment>
<comment type="catalytic activity">
    <reaction evidence="1">
        <text>Exonucleolytic cleavage in either 5'- to 3'- or 3'- to 5'-direction to yield nucleoside 5'-phosphates.</text>
        <dbReference type="EC" id="3.1.11.6"/>
    </reaction>
</comment>
<comment type="subunit">
    <text evidence="1">Heterooligomer composed of large and small subunits.</text>
</comment>
<comment type="subcellular location">
    <subcellularLocation>
        <location evidence="1">Cytoplasm</location>
    </subcellularLocation>
</comment>
<comment type="similarity">
    <text evidence="1">Belongs to the XseB family.</text>
</comment>
<keyword id="KW-0963">Cytoplasm</keyword>
<keyword id="KW-0269">Exonuclease</keyword>
<keyword id="KW-0378">Hydrolase</keyword>
<keyword id="KW-0540">Nuclease</keyword>
<evidence type="ECO:0000255" key="1">
    <source>
        <dbReference type="HAMAP-Rule" id="MF_00337"/>
    </source>
</evidence>
<name>EX7S_BACC7</name>
<dbReference type="EC" id="3.1.11.6" evidence="1"/>
<dbReference type="EMBL" id="CP001177">
    <property type="protein sequence ID" value="ACJ81529.1"/>
    <property type="molecule type" value="Genomic_DNA"/>
</dbReference>
<dbReference type="SMR" id="B7HNU2"/>
<dbReference type="KEGG" id="bcr:BCAH187_A4309"/>
<dbReference type="HOGENOM" id="CLU_145918_3_1_9"/>
<dbReference type="Proteomes" id="UP000002214">
    <property type="component" value="Chromosome"/>
</dbReference>
<dbReference type="GO" id="GO:0005829">
    <property type="term" value="C:cytosol"/>
    <property type="evidence" value="ECO:0007669"/>
    <property type="project" value="TreeGrafter"/>
</dbReference>
<dbReference type="GO" id="GO:0009318">
    <property type="term" value="C:exodeoxyribonuclease VII complex"/>
    <property type="evidence" value="ECO:0007669"/>
    <property type="project" value="InterPro"/>
</dbReference>
<dbReference type="GO" id="GO:0008855">
    <property type="term" value="F:exodeoxyribonuclease VII activity"/>
    <property type="evidence" value="ECO:0007669"/>
    <property type="project" value="UniProtKB-UniRule"/>
</dbReference>
<dbReference type="GO" id="GO:0006308">
    <property type="term" value="P:DNA catabolic process"/>
    <property type="evidence" value="ECO:0007669"/>
    <property type="project" value="UniProtKB-UniRule"/>
</dbReference>
<dbReference type="FunFam" id="1.10.287.1040:FF:000002">
    <property type="entry name" value="Exodeoxyribonuclease 7 small subunit"/>
    <property type="match status" value="1"/>
</dbReference>
<dbReference type="Gene3D" id="1.10.287.1040">
    <property type="entry name" value="Exonuclease VII, small subunit"/>
    <property type="match status" value="1"/>
</dbReference>
<dbReference type="HAMAP" id="MF_00337">
    <property type="entry name" value="Exonuc_7_S"/>
    <property type="match status" value="1"/>
</dbReference>
<dbReference type="InterPro" id="IPR003761">
    <property type="entry name" value="Exonuc_VII_S"/>
</dbReference>
<dbReference type="InterPro" id="IPR037004">
    <property type="entry name" value="Exonuc_VII_ssu_sf"/>
</dbReference>
<dbReference type="NCBIfam" id="NF010666">
    <property type="entry name" value="PRK14063.1"/>
    <property type="match status" value="1"/>
</dbReference>
<dbReference type="NCBIfam" id="TIGR01280">
    <property type="entry name" value="xseB"/>
    <property type="match status" value="1"/>
</dbReference>
<dbReference type="PANTHER" id="PTHR34137">
    <property type="entry name" value="EXODEOXYRIBONUCLEASE 7 SMALL SUBUNIT"/>
    <property type="match status" value="1"/>
</dbReference>
<dbReference type="PANTHER" id="PTHR34137:SF1">
    <property type="entry name" value="EXODEOXYRIBONUCLEASE 7 SMALL SUBUNIT"/>
    <property type="match status" value="1"/>
</dbReference>
<dbReference type="Pfam" id="PF02609">
    <property type="entry name" value="Exonuc_VII_S"/>
    <property type="match status" value="1"/>
</dbReference>
<dbReference type="PIRSF" id="PIRSF006488">
    <property type="entry name" value="Exonuc_VII_S"/>
    <property type="match status" value="1"/>
</dbReference>
<dbReference type="SUPFAM" id="SSF116842">
    <property type="entry name" value="XseB-like"/>
    <property type="match status" value="1"/>
</dbReference>
<protein>
    <recommendedName>
        <fullName evidence="1">Exodeoxyribonuclease 7 small subunit</fullName>
        <ecNumber evidence="1">3.1.11.6</ecNumber>
    </recommendedName>
    <alternativeName>
        <fullName evidence="1">Exodeoxyribonuclease VII small subunit</fullName>
        <shortName evidence="1">Exonuclease VII small subunit</shortName>
    </alternativeName>
</protein>
<proteinExistence type="inferred from homology"/>
<sequence length="76" mass="8516">MENKLSFEEAISQLEHLVSKLEQGDVPLEEAISYFKEGMELSKLCDEKLKNVQEQMAVILGEDGELEPFTALGDEA</sequence>
<feature type="chain" id="PRO_1000119900" description="Exodeoxyribonuclease 7 small subunit">
    <location>
        <begin position="1"/>
        <end position="76"/>
    </location>
</feature>
<reference key="1">
    <citation type="submission" date="2008-10" db="EMBL/GenBank/DDBJ databases">
        <title>Genome sequence of Bacillus cereus AH187.</title>
        <authorList>
            <person name="Dodson R.J."/>
            <person name="Durkin A.S."/>
            <person name="Rosovitz M.J."/>
            <person name="Rasko D.A."/>
            <person name="Kolsto A.B."/>
            <person name="Okstad O.A."/>
            <person name="Ravel J."/>
            <person name="Sutton G."/>
        </authorList>
    </citation>
    <scope>NUCLEOTIDE SEQUENCE [LARGE SCALE GENOMIC DNA]</scope>
    <source>
        <strain>AH187</strain>
    </source>
</reference>
<organism>
    <name type="scientific">Bacillus cereus (strain AH187)</name>
    <dbReference type="NCBI Taxonomy" id="405534"/>
    <lineage>
        <taxon>Bacteria</taxon>
        <taxon>Bacillati</taxon>
        <taxon>Bacillota</taxon>
        <taxon>Bacilli</taxon>
        <taxon>Bacillales</taxon>
        <taxon>Bacillaceae</taxon>
        <taxon>Bacillus</taxon>
        <taxon>Bacillus cereus group</taxon>
    </lineage>
</organism>